<name>ISPG_RHOPT</name>
<comment type="function">
    <text evidence="1">Converts 2C-methyl-D-erythritol 2,4-cyclodiphosphate (ME-2,4cPP) into 1-hydroxy-2-methyl-2-(E)-butenyl 4-diphosphate.</text>
</comment>
<comment type="catalytic activity">
    <reaction evidence="1">
        <text>(2E)-4-hydroxy-3-methylbut-2-enyl diphosphate + oxidized [flavodoxin] + H2O + 2 H(+) = 2-C-methyl-D-erythritol 2,4-cyclic diphosphate + reduced [flavodoxin]</text>
        <dbReference type="Rhea" id="RHEA:43604"/>
        <dbReference type="Rhea" id="RHEA-COMP:10622"/>
        <dbReference type="Rhea" id="RHEA-COMP:10623"/>
        <dbReference type="ChEBI" id="CHEBI:15377"/>
        <dbReference type="ChEBI" id="CHEBI:15378"/>
        <dbReference type="ChEBI" id="CHEBI:57618"/>
        <dbReference type="ChEBI" id="CHEBI:58210"/>
        <dbReference type="ChEBI" id="CHEBI:58483"/>
        <dbReference type="ChEBI" id="CHEBI:128753"/>
        <dbReference type="EC" id="1.17.7.3"/>
    </reaction>
</comment>
<comment type="cofactor">
    <cofactor evidence="1">
        <name>[4Fe-4S] cluster</name>
        <dbReference type="ChEBI" id="CHEBI:49883"/>
    </cofactor>
    <text evidence="1">Binds 1 [4Fe-4S] cluster.</text>
</comment>
<comment type="pathway">
    <text evidence="1">Isoprenoid biosynthesis; isopentenyl diphosphate biosynthesis via DXP pathway; isopentenyl diphosphate from 1-deoxy-D-xylulose 5-phosphate: step 5/6.</text>
</comment>
<comment type="similarity">
    <text evidence="1">Belongs to the IspG family.</text>
</comment>
<organism>
    <name type="scientific">Rhodopseudomonas palustris (strain TIE-1)</name>
    <dbReference type="NCBI Taxonomy" id="395960"/>
    <lineage>
        <taxon>Bacteria</taxon>
        <taxon>Pseudomonadati</taxon>
        <taxon>Pseudomonadota</taxon>
        <taxon>Alphaproteobacteria</taxon>
        <taxon>Hyphomicrobiales</taxon>
        <taxon>Nitrobacteraceae</taxon>
        <taxon>Rhodopseudomonas</taxon>
    </lineage>
</organism>
<evidence type="ECO:0000255" key="1">
    <source>
        <dbReference type="HAMAP-Rule" id="MF_00159"/>
    </source>
</evidence>
<evidence type="ECO:0000256" key="2">
    <source>
        <dbReference type="SAM" id="MobiDB-lite"/>
    </source>
</evidence>
<accession>B3QBC6</accession>
<feature type="chain" id="PRO_1000097177" description="4-hydroxy-3-methylbut-2-en-1-yl diphosphate synthase (flavodoxin)">
    <location>
        <begin position="1"/>
        <end position="431"/>
    </location>
</feature>
<feature type="region of interest" description="Disordered" evidence="2">
    <location>
        <begin position="1"/>
        <end position="20"/>
    </location>
</feature>
<feature type="compositionally biased region" description="Basic and acidic residues" evidence="2">
    <location>
        <begin position="1"/>
        <end position="12"/>
    </location>
</feature>
<feature type="binding site" evidence="1">
    <location>
        <position position="310"/>
    </location>
    <ligand>
        <name>[4Fe-4S] cluster</name>
        <dbReference type="ChEBI" id="CHEBI:49883"/>
    </ligand>
</feature>
<feature type="binding site" evidence="1">
    <location>
        <position position="313"/>
    </location>
    <ligand>
        <name>[4Fe-4S] cluster</name>
        <dbReference type="ChEBI" id="CHEBI:49883"/>
    </ligand>
</feature>
<feature type="binding site" evidence="1">
    <location>
        <position position="356"/>
    </location>
    <ligand>
        <name>[4Fe-4S] cluster</name>
        <dbReference type="ChEBI" id="CHEBI:49883"/>
    </ligand>
</feature>
<feature type="binding site" evidence="1">
    <location>
        <position position="363"/>
    </location>
    <ligand>
        <name>[4Fe-4S] cluster</name>
        <dbReference type="ChEBI" id="CHEBI:49883"/>
    </ligand>
</feature>
<keyword id="KW-0004">4Fe-4S</keyword>
<keyword id="KW-0408">Iron</keyword>
<keyword id="KW-0411">Iron-sulfur</keyword>
<keyword id="KW-0414">Isoprene biosynthesis</keyword>
<keyword id="KW-0479">Metal-binding</keyword>
<keyword id="KW-0560">Oxidoreductase</keyword>
<sequence length="431" mass="46034">MNKLENPLRDDVAGPAPRHQTTQVMVGDVAVGGGAPIVVQSMTNTDTADVEGTIKQIAALARAGSEMVRITVDREEAAAAVPHIRDGIRKLGLTTPIIGDFHYIGHKLLAEYPACAEALDKYRINPGNVGFKNKRDTQFADIVEIAIKNNKAVRIGANWGSLDQELLTKLMDENAASANPRDVRAVTREAMVQSALLSAARAEEIGLPKNKMILSAKVSAVQDLIAVYQDLASRSDYAIHLGLTEAGMGSKGIVASSAALGILLQQGIGDTIRISLTPEPGGDRTREVQVGQELLQTMGFRTFVPLVAACPGCGRTTSTTFQELARSIQDFIRDEMPEWRSRYPGVENLNVAVMGCIVNGPGESKHANIGISLPGTGETPAAPVFVDGEKFRTLRGENIAADFKALVIDYIEQRYGATPKPGAAQMVPAAE</sequence>
<gene>
    <name evidence="1" type="primary">ispG</name>
    <name type="ordered locus">Rpal_0520</name>
</gene>
<dbReference type="EC" id="1.17.7.3" evidence="1"/>
<dbReference type="EMBL" id="CP001096">
    <property type="protein sequence ID" value="ACE99079.1"/>
    <property type="molecule type" value="Genomic_DNA"/>
</dbReference>
<dbReference type="RefSeq" id="WP_012494214.1">
    <property type="nucleotide sequence ID" value="NC_011004.1"/>
</dbReference>
<dbReference type="SMR" id="B3QBC6"/>
<dbReference type="KEGG" id="rpt:Rpal_0520"/>
<dbReference type="HOGENOM" id="CLU_042258_1_0_5"/>
<dbReference type="OrthoDB" id="9803214at2"/>
<dbReference type="UniPathway" id="UPA00056">
    <property type="reaction ID" value="UER00096"/>
</dbReference>
<dbReference type="Proteomes" id="UP000001725">
    <property type="component" value="Chromosome"/>
</dbReference>
<dbReference type="GO" id="GO:0051539">
    <property type="term" value="F:4 iron, 4 sulfur cluster binding"/>
    <property type="evidence" value="ECO:0007669"/>
    <property type="project" value="UniProtKB-UniRule"/>
</dbReference>
<dbReference type="GO" id="GO:0046429">
    <property type="term" value="F:4-hydroxy-3-methylbut-2-en-1-yl diphosphate synthase activity (ferredoxin)"/>
    <property type="evidence" value="ECO:0007669"/>
    <property type="project" value="UniProtKB-UniRule"/>
</dbReference>
<dbReference type="GO" id="GO:0141197">
    <property type="term" value="F:4-hydroxy-3-methylbut-2-enyl-diphosphate synthase activity (flavodoxin)"/>
    <property type="evidence" value="ECO:0007669"/>
    <property type="project" value="UniProtKB-EC"/>
</dbReference>
<dbReference type="GO" id="GO:0005506">
    <property type="term" value="F:iron ion binding"/>
    <property type="evidence" value="ECO:0007669"/>
    <property type="project" value="InterPro"/>
</dbReference>
<dbReference type="GO" id="GO:0019288">
    <property type="term" value="P:isopentenyl diphosphate biosynthetic process, methylerythritol 4-phosphate pathway"/>
    <property type="evidence" value="ECO:0007669"/>
    <property type="project" value="UniProtKB-UniRule"/>
</dbReference>
<dbReference type="GO" id="GO:0016114">
    <property type="term" value="P:terpenoid biosynthetic process"/>
    <property type="evidence" value="ECO:0007669"/>
    <property type="project" value="InterPro"/>
</dbReference>
<dbReference type="FunFam" id="3.20.20.20:FF:000001">
    <property type="entry name" value="4-hydroxy-3-methylbut-2-en-1-yl diphosphate synthase (flavodoxin)"/>
    <property type="match status" value="1"/>
</dbReference>
<dbReference type="FunFam" id="3.30.413.10:FF:000012">
    <property type="entry name" value="4-hydroxy-3-methylbut-2-en-1-yl diphosphate synthase (flavodoxin)"/>
    <property type="match status" value="1"/>
</dbReference>
<dbReference type="Gene3D" id="3.20.20.20">
    <property type="entry name" value="Dihydropteroate synthase-like"/>
    <property type="match status" value="1"/>
</dbReference>
<dbReference type="Gene3D" id="3.30.413.10">
    <property type="entry name" value="Sulfite Reductase Hemoprotein, domain 1"/>
    <property type="match status" value="1"/>
</dbReference>
<dbReference type="HAMAP" id="MF_00159">
    <property type="entry name" value="IspG"/>
    <property type="match status" value="1"/>
</dbReference>
<dbReference type="InterPro" id="IPR011005">
    <property type="entry name" value="Dihydropteroate_synth-like_sf"/>
</dbReference>
<dbReference type="InterPro" id="IPR016425">
    <property type="entry name" value="IspG_bac"/>
</dbReference>
<dbReference type="InterPro" id="IPR004588">
    <property type="entry name" value="IspG_bac-typ"/>
</dbReference>
<dbReference type="InterPro" id="IPR045854">
    <property type="entry name" value="NO2/SO3_Rdtase_4Fe4S_sf"/>
</dbReference>
<dbReference type="NCBIfam" id="TIGR00612">
    <property type="entry name" value="ispG_gcpE"/>
    <property type="match status" value="1"/>
</dbReference>
<dbReference type="NCBIfam" id="NF001540">
    <property type="entry name" value="PRK00366.1"/>
    <property type="match status" value="1"/>
</dbReference>
<dbReference type="PANTHER" id="PTHR30454">
    <property type="entry name" value="4-HYDROXY-3-METHYLBUT-2-EN-1-YL DIPHOSPHATE SYNTHASE"/>
    <property type="match status" value="1"/>
</dbReference>
<dbReference type="PANTHER" id="PTHR30454:SF0">
    <property type="entry name" value="4-HYDROXY-3-METHYLBUT-2-EN-1-YL DIPHOSPHATE SYNTHASE (FERREDOXIN), CHLOROPLASTIC"/>
    <property type="match status" value="1"/>
</dbReference>
<dbReference type="Pfam" id="PF04551">
    <property type="entry name" value="GcpE"/>
    <property type="match status" value="1"/>
</dbReference>
<dbReference type="PIRSF" id="PIRSF004640">
    <property type="entry name" value="IspG"/>
    <property type="match status" value="1"/>
</dbReference>
<proteinExistence type="inferred from homology"/>
<protein>
    <recommendedName>
        <fullName evidence="1">4-hydroxy-3-methylbut-2-en-1-yl diphosphate synthase (flavodoxin)</fullName>
        <ecNumber evidence="1">1.17.7.3</ecNumber>
    </recommendedName>
    <alternativeName>
        <fullName evidence="1">1-hydroxy-2-methyl-2-(E)-butenyl 4-diphosphate synthase</fullName>
    </alternativeName>
</protein>
<reference key="1">
    <citation type="submission" date="2008-05" db="EMBL/GenBank/DDBJ databases">
        <title>Complete sequence of Rhodopseudomonas palustris TIE-1.</title>
        <authorList>
            <consortium name="US DOE Joint Genome Institute"/>
            <person name="Lucas S."/>
            <person name="Copeland A."/>
            <person name="Lapidus A."/>
            <person name="Glavina del Rio T."/>
            <person name="Dalin E."/>
            <person name="Tice H."/>
            <person name="Pitluck S."/>
            <person name="Chain P."/>
            <person name="Malfatti S."/>
            <person name="Shin M."/>
            <person name="Vergez L."/>
            <person name="Lang D."/>
            <person name="Schmutz J."/>
            <person name="Larimer F."/>
            <person name="Land M."/>
            <person name="Hauser L."/>
            <person name="Kyrpides N."/>
            <person name="Mikhailova N."/>
            <person name="Emerson D."/>
            <person name="Newman D.K."/>
            <person name="Roden E."/>
            <person name="Richardson P."/>
        </authorList>
    </citation>
    <scope>NUCLEOTIDE SEQUENCE [LARGE SCALE GENOMIC DNA]</scope>
    <source>
        <strain>TIE-1</strain>
    </source>
</reference>